<comment type="function">
    <text evidence="1 8 9">Secreted metalloproteinase that allows assimilation of proteinaceous substrates and probably acts as a virulence factor (By similarity). Catalyzes the hydrolysis of elastin (PubMed:7927676, PubMed:8188335). Hydrolyzes azocasein, synthetic fluorigenic substrate Abz-Ala-Ala-Phe-Phe-pNA, and His-Leu, Ala-Leu, Tyr-Leu, Gly-Phe, and Phe-Phe peptide bonds in the B chain of insulin (PubMed:8188335).</text>
</comment>
<comment type="cofactor">
    <cofactor evidence="7">
        <name>Zn(2+)</name>
        <dbReference type="ChEBI" id="CHEBI:29105"/>
    </cofactor>
    <text evidence="7">Binds 1 zinc ion per subunit.</text>
</comment>
<comment type="activity regulation">
    <text evidence="9">Completely inhibited by metalloprotease inhibitors EDTA, 1,10-phenanthroline, and phosphoramidon, but not by inhibitors specific for serine, cysteine, and aspartate proteases, such as PMSF, antipain, leupeptin, chymostatin, and pepstatin. Zn(2+) and, to a lesser extent, Co(2+) reversed the inhibition of 1,10-phenanthroline.</text>
</comment>
<comment type="biophysicochemical properties">
    <phDependence>
        <text evidence="9">Optimum pH is 7.5-8.0.</text>
    </phDependence>
    <temperatureDependence>
        <text evidence="9">Optimum temperature is 60 degrees Celsius against azocasein. Retains 50% of the activity by incubation at 60 degrees Celsius for 1 hour.</text>
    </temperatureDependence>
</comment>
<comment type="subcellular location">
    <subcellularLocation>
        <location evidence="7 9">Secreted</location>
    </subcellularLocation>
    <text evidence="9">Secreted in the neutropenic mouse lungs by invading Aspergillus fumigatus.</text>
</comment>
<comment type="induction">
    <text evidence="5 6 9">By Zn(2+) (PubMed:8188335). Expression is controlled by the prtT transcription factor (PubMed:19564385, PubMed:19564390).</text>
</comment>
<comment type="PTM">
    <text evidence="7 9">Not glycosylated according to PubMed:8188335, but glycosylated according to PubMed:24100314.</text>
</comment>
<comment type="allergen">
    <text evidence="10">Causes an allergic reaction in human. Recombinant protein binds to IgE in 93% of the 54 patients tested suffering with allergic bronchopulmonary aspergillosis (ABPA). Recombinant protein binds to IgE in 74% of the 35 A.fumigatus-allergic patients tested without ABPA.</text>
</comment>
<comment type="similarity">
    <text evidence="13">Belongs to the peptidase M36 family.</text>
</comment>
<dbReference type="EC" id="3.4.24.-" evidence="7 8 9"/>
<dbReference type="EMBL" id="Z30424">
    <property type="protein sequence ID" value="CAA83015.1"/>
    <property type="molecule type" value="Genomic_DNA"/>
</dbReference>
<dbReference type="EMBL" id="L29566">
    <property type="protein sequence ID" value="AAB07708.1"/>
    <property type="molecule type" value="Genomic_DNA"/>
</dbReference>
<dbReference type="EMBL" id="AAHF01000013">
    <property type="protein sequence ID" value="EAL85468.1"/>
    <property type="molecule type" value="Genomic_DNA"/>
</dbReference>
<dbReference type="PIR" id="S61435">
    <property type="entry name" value="S61435"/>
</dbReference>
<dbReference type="RefSeq" id="XP_747506.1">
    <property type="nucleotide sequence ID" value="XM_742413.1"/>
</dbReference>
<dbReference type="PDB" id="4K90">
    <property type="method" value="X-ray"/>
    <property type="resolution" value="1.80 A"/>
    <property type="chains" value="A=246-634, B=31-245"/>
</dbReference>
<dbReference type="PDBsum" id="4K90"/>
<dbReference type="SMR" id="P46075"/>
<dbReference type="STRING" id="330879.P46075"/>
<dbReference type="Allergome" id="3123">
    <property type="allergen name" value="Asp f 5.0101"/>
</dbReference>
<dbReference type="Allergome" id="75">
    <property type="allergen name" value="Asp f 5"/>
</dbReference>
<dbReference type="MEROPS" id="M36.001"/>
<dbReference type="GlyCosmos" id="P46075">
    <property type="glycosylation" value="2 sites, No reported glycans"/>
</dbReference>
<dbReference type="iPTMnet" id="P46075"/>
<dbReference type="EnsemblFungi" id="EAL85468">
    <property type="protein sequence ID" value="EAL85468"/>
    <property type="gene ID" value="AFUA_8G07080"/>
</dbReference>
<dbReference type="GeneID" id="3504960"/>
<dbReference type="KEGG" id="afm:AFUA_8G07080"/>
<dbReference type="VEuPathDB" id="FungiDB:Afu8g07080"/>
<dbReference type="eggNOG" id="ENOG502QTDC">
    <property type="taxonomic scope" value="Eukaryota"/>
</dbReference>
<dbReference type="HOGENOM" id="CLU_012703_3_0_1"/>
<dbReference type="InParanoid" id="P46075"/>
<dbReference type="OMA" id="IRKDSYT"/>
<dbReference type="OrthoDB" id="3227768at2759"/>
<dbReference type="EvolutionaryTrace" id="P46075"/>
<dbReference type="Proteomes" id="UP000002530">
    <property type="component" value="Chromosome 8"/>
</dbReference>
<dbReference type="GO" id="GO:0005576">
    <property type="term" value="C:extracellular region"/>
    <property type="evidence" value="ECO:0007669"/>
    <property type="project" value="UniProtKB-SubCell"/>
</dbReference>
<dbReference type="GO" id="GO:0004222">
    <property type="term" value="F:metalloendopeptidase activity"/>
    <property type="evidence" value="ECO:0007669"/>
    <property type="project" value="InterPro"/>
</dbReference>
<dbReference type="GO" id="GO:0008270">
    <property type="term" value="F:zinc ion binding"/>
    <property type="evidence" value="ECO:0007669"/>
    <property type="project" value="InterPro"/>
</dbReference>
<dbReference type="GO" id="GO:0006508">
    <property type="term" value="P:proteolysis"/>
    <property type="evidence" value="ECO:0007669"/>
    <property type="project" value="UniProtKB-KW"/>
</dbReference>
<dbReference type="CDD" id="cd09596">
    <property type="entry name" value="M36"/>
    <property type="match status" value="1"/>
</dbReference>
<dbReference type="Gene3D" id="3.10.170.10">
    <property type="match status" value="1"/>
</dbReference>
<dbReference type="Gene3D" id="1.10.390.10">
    <property type="entry name" value="Neutral Protease Domain 2"/>
    <property type="match status" value="1"/>
</dbReference>
<dbReference type="InterPro" id="IPR011096">
    <property type="entry name" value="FTP_domain"/>
</dbReference>
<dbReference type="InterPro" id="IPR050371">
    <property type="entry name" value="Fungal_virulence_M36"/>
</dbReference>
<dbReference type="InterPro" id="IPR001842">
    <property type="entry name" value="Peptidase_M36"/>
</dbReference>
<dbReference type="InterPro" id="IPR027268">
    <property type="entry name" value="Peptidase_M4/M1_CTD_sf"/>
</dbReference>
<dbReference type="PANTHER" id="PTHR33478">
    <property type="entry name" value="EXTRACELLULAR METALLOPROTEINASE MEP"/>
    <property type="match status" value="1"/>
</dbReference>
<dbReference type="PANTHER" id="PTHR33478:SF1">
    <property type="entry name" value="EXTRACELLULAR METALLOPROTEINASE MEP"/>
    <property type="match status" value="1"/>
</dbReference>
<dbReference type="Pfam" id="PF07504">
    <property type="entry name" value="FTP"/>
    <property type="match status" value="1"/>
</dbReference>
<dbReference type="Pfam" id="PF02128">
    <property type="entry name" value="Peptidase_M36"/>
    <property type="match status" value="1"/>
</dbReference>
<dbReference type="PRINTS" id="PR00999">
    <property type="entry name" value="FUNGALYSIN"/>
</dbReference>
<dbReference type="SUPFAM" id="SSF55486">
    <property type="entry name" value="Metalloproteases ('zincins'), catalytic domain"/>
    <property type="match status" value="1"/>
</dbReference>
<dbReference type="PROSITE" id="PS00142">
    <property type="entry name" value="ZINC_PROTEASE"/>
    <property type="match status" value="1"/>
</dbReference>
<proteinExistence type="evidence at protein level"/>
<sequence>MRGLLLAGALALPASVFAHPAHQSYGLNRRTVDLNAFRLKSLAKYVNATETVIEAPSSFAPFKPQSYVEVATQHVKMIAPDATFRVVDDHYVGDNGVAHVHFRQTANGLDIDNADFNVNVGKDGKVFSYGNSFYTGQIPSSAALTKRDFSDPVTALKGTTNTLQLPITVDSASSESTEEKESYVFKGVSGTVSDPKAKLVYFVKDDGTLALAWRVETDIDSNWLLTYIDAKSGEEIHGVVDYVAEADYQVYAWGINDPTEGERTVIKDPWDSVASEFTWISDGSTNYTTSRGNNGIAQSNPSGGSSYLNNYRPSSSSLSFKYPYSVSSSPPSSYIDASIIQLFYTANIYHDLLYTLGFTEKAGNFEYNTNGQGGLGNDYVILNAQDGSGTNNANFATPPDGQPGRMRMYVWTESTPYRDGSFEAGIVIHEYTHGLSNRLTGGPANSNCLNALESGGMGEGWSDFMATAIRLKPGDKRSTDYTMGEWASNRAGGIRQYPYSTSLSTNPLTYTSVNSLNAVHAIGTVWASMLYEVLWNLIDKHGKNDAPKPTLRDGVPTDGKYLAMKLVMDGMALQPCNPNFVQARDAILDADTALTGGENQCEIWTAFAKRGLGAGAKYSSRNRVGSTEVPSGVC</sequence>
<name>ELM_ASPFU</name>
<organism>
    <name type="scientific">Aspergillus fumigatus (strain ATCC MYA-4609 / CBS 101355 / FGSC A1100 / Af293)</name>
    <name type="common">Neosartorya fumigata</name>
    <dbReference type="NCBI Taxonomy" id="330879"/>
    <lineage>
        <taxon>Eukaryota</taxon>
        <taxon>Fungi</taxon>
        <taxon>Dikarya</taxon>
        <taxon>Ascomycota</taxon>
        <taxon>Pezizomycotina</taxon>
        <taxon>Eurotiomycetes</taxon>
        <taxon>Eurotiomycetidae</taxon>
        <taxon>Eurotiales</taxon>
        <taxon>Aspergillaceae</taxon>
        <taxon>Aspergillus</taxon>
        <taxon>Aspergillus subgen. Fumigati</taxon>
    </lineage>
</organism>
<keyword id="KW-0002">3D-structure</keyword>
<keyword id="KW-0020">Allergen</keyword>
<keyword id="KW-0106">Calcium</keyword>
<keyword id="KW-0903">Direct protein sequencing</keyword>
<keyword id="KW-1015">Disulfide bond</keyword>
<keyword id="KW-0325">Glycoprotein</keyword>
<keyword id="KW-0378">Hydrolase</keyword>
<keyword id="KW-0479">Metal-binding</keyword>
<keyword id="KW-0482">Metalloprotease</keyword>
<keyword id="KW-0645">Protease</keyword>
<keyword id="KW-1185">Reference proteome</keyword>
<keyword id="KW-0964">Secreted</keyword>
<keyword id="KW-0732">Signal</keyword>
<keyword id="KW-0843">Virulence</keyword>
<keyword id="KW-0862">Zinc</keyword>
<keyword id="KW-0865">Zymogen</keyword>
<gene>
    <name type="primary">mep</name>
    <name type="ORF">AFUA_8G07080</name>
</gene>
<evidence type="ECO:0000250" key="1"/>
<evidence type="ECO:0000255" key="2"/>
<evidence type="ECO:0000255" key="3">
    <source>
        <dbReference type="PROSITE-ProRule" id="PRU00498"/>
    </source>
</evidence>
<evidence type="ECO:0000255" key="4">
    <source>
        <dbReference type="PROSITE-ProRule" id="PRU10095"/>
    </source>
</evidence>
<evidence type="ECO:0000269" key="5">
    <source>
    </source>
</evidence>
<evidence type="ECO:0000269" key="6">
    <source>
    </source>
</evidence>
<evidence type="ECO:0000269" key="7">
    <source>
    </source>
</evidence>
<evidence type="ECO:0000269" key="8">
    <source>
    </source>
</evidence>
<evidence type="ECO:0000269" key="9">
    <source>
    </source>
</evidence>
<evidence type="ECO:0000269" key="10">
    <source>
    </source>
</evidence>
<evidence type="ECO:0000303" key="11">
    <source>
    </source>
</evidence>
<evidence type="ECO:0000303" key="12">
    <source>
    </source>
</evidence>
<evidence type="ECO:0000305" key="13"/>
<evidence type="ECO:0000305" key="14">
    <source>
    </source>
</evidence>
<evidence type="ECO:0000305" key="15">
    <source>
    </source>
</evidence>
<evidence type="ECO:0007744" key="16">
    <source>
        <dbReference type="PDB" id="4K90"/>
    </source>
</evidence>
<evidence type="ECO:0007829" key="17">
    <source>
        <dbReference type="PDB" id="4K90"/>
    </source>
</evidence>
<reference key="1">
    <citation type="journal article" date="1994" name="Mol. Microbiol.">
        <title>Cloning and disruption of the gene encoding an extracellular metalloprotease of Aspergillus fumigatus.</title>
        <authorList>
            <person name="Jaton-Ogay K."/>
            <person name="Paris S."/>
            <person name="Huerre M."/>
            <person name="Quadroni M."/>
            <person name="Falchetto R."/>
            <person name="Togni G."/>
            <person name="Latge J.-P."/>
            <person name="Monod M."/>
        </authorList>
    </citation>
    <scope>NUCLEOTIDE SEQUENCE [GENOMIC DNA]</scope>
    <scope>PARTIAL PROTEIN SEQUENCE</scope>
    <source>
        <strain>Delta18</strain>
    </source>
</reference>
<reference key="2">
    <citation type="submission" date="1998-10" db="EMBL/GenBank/DDBJ databases">
        <authorList>
            <person name="Sanglard D."/>
        </authorList>
    </citation>
    <scope>SEQUENCE REVISION</scope>
</reference>
<reference key="3">
    <citation type="journal article" date="1994" name="Infect. Immun.">
        <title>Molecular cloning and sequencing of the cDNA and gene for a novel elastinolytic metalloproteinase from Aspergillus fumigatus and its expression in Escherichia coli.</title>
        <authorList>
            <person name="Sirakova T.D."/>
            <person name="Markaryan A."/>
            <person name="Kolattukudy P.E."/>
        </authorList>
    </citation>
    <scope>NUCLEOTIDE SEQUENCE [GENOMIC DNA]</scope>
    <scope>PROTEIN SEQUENCE OF 530-542</scope>
    <scope>FUNCTION</scope>
    <scope>CATALYTIC ACTIVITY</scope>
    <source>
        <strain>Isolate 13</strain>
    </source>
</reference>
<reference key="4">
    <citation type="journal article" date="2005" name="Nature">
        <title>Genomic sequence of the pathogenic and allergenic filamentous fungus Aspergillus fumigatus.</title>
        <authorList>
            <person name="Nierman W.C."/>
            <person name="Pain A."/>
            <person name="Anderson M.J."/>
            <person name="Wortman J.R."/>
            <person name="Kim H.S."/>
            <person name="Arroyo J."/>
            <person name="Berriman M."/>
            <person name="Abe K."/>
            <person name="Archer D.B."/>
            <person name="Bermejo C."/>
            <person name="Bennett J.W."/>
            <person name="Bowyer P."/>
            <person name="Chen D."/>
            <person name="Collins M."/>
            <person name="Coulsen R."/>
            <person name="Davies R."/>
            <person name="Dyer P.S."/>
            <person name="Farman M.L."/>
            <person name="Fedorova N."/>
            <person name="Fedorova N.D."/>
            <person name="Feldblyum T.V."/>
            <person name="Fischer R."/>
            <person name="Fosker N."/>
            <person name="Fraser A."/>
            <person name="Garcia J.L."/>
            <person name="Garcia M.J."/>
            <person name="Goble A."/>
            <person name="Goldman G.H."/>
            <person name="Gomi K."/>
            <person name="Griffith-Jones S."/>
            <person name="Gwilliam R."/>
            <person name="Haas B.J."/>
            <person name="Haas H."/>
            <person name="Harris D.E."/>
            <person name="Horiuchi H."/>
            <person name="Huang J."/>
            <person name="Humphray S."/>
            <person name="Jimenez J."/>
            <person name="Keller N."/>
            <person name="Khouri H."/>
            <person name="Kitamoto K."/>
            <person name="Kobayashi T."/>
            <person name="Konzack S."/>
            <person name="Kulkarni R."/>
            <person name="Kumagai T."/>
            <person name="Lafton A."/>
            <person name="Latge J.-P."/>
            <person name="Li W."/>
            <person name="Lord A."/>
            <person name="Lu C."/>
            <person name="Majoros W.H."/>
            <person name="May G.S."/>
            <person name="Miller B.L."/>
            <person name="Mohamoud Y."/>
            <person name="Molina M."/>
            <person name="Monod M."/>
            <person name="Mouyna I."/>
            <person name="Mulligan S."/>
            <person name="Murphy L.D."/>
            <person name="O'Neil S."/>
            <person name="Paulsen I."/>
            <person name="Penalva M.A."/>
            <person name="Pertea M."/>
            <person name="Price C."/>
            <person name="Pritchard B.L."/>
            <person name="Quail M.A."/>
            <person name="Rabbinowitsch E."/>
            <person name="Rawlins N."/>
            <person name="Rajandream M.A."/>
            <person name="Reichard U."/>
            <person name="Renauld H."/>
            <person name="Robson G.D."/>
            <person name="Rodriguez de Cordoba S."/>
            <person name="Rodriguez-Pena J.M."/>
            <person name="Ronning C.M."/>
            <person name="Rutter S."/>
            <person name="Salzberg S.L."/>
            <person name="Sanchez M."/>
            <person name="Sanchez-Ferrero J.C."/>
            <person name="Saunders D."/>
            <person name="Seeger K."/>
            <person name="Squares R."/>
            <person name="Squares S."/>
            <person name="Takeuchi M."/>
            <person name="Tekaia F."/>
            <person name="Turner G."/>
            <person name="Vazquez de Aldana C.R."/>
            <person name="Weidman J."/>
            <person name="White O."/>
            <person name="Woodward J.R."/>
            <person name="Yu J.-H."/>
            <person name="Fraser C.M."/>
            <person name="Galagan J.E."/>
            <person name="Asai K."/>
            <person name="Machida M."/>
            <person name="Hall N."/>
            <person name="Barrell B.G."/>
            <person name="Denning D.W."/>
        </authorList>
    </citation>
    <scope>NUCLEOTIDE SEQUENCE [LARGE SCALE GENOMIC DNA]</scope>
    <source>
        <strain>ATCC MYA-4609 / CBS 101355 / FGSC A1100 / Af293</strain>
    </source>
</reference>
<reference key="5">
    <citation type="journal article" date="1994" name="Infect. Immun.">
        <title>Purification and characterization of an elastinolytic metalloprotease from Aspergillus fumigatus and immunoelectron microscopic evidence of secretion of this enzyme by the fungus invading the murine lung.</title>
        <authorList>
            <person name="Markaryan A."/>
            <person name="Morozova I."/>
            <person name="Yu H."/>
            <person name="Kolattukudy P.E."/>
        </authorList>
    </citation>
    <scope>PROTEIN SEQUENCE OF 246-267</scope>
    <scope>FUNCTION</scope>
    <scope>CATALYTIC ACTIVITY</scope>
    <scope>ACTIVITY REGULATION</scope>
    <scope>BIOPHYSICOCHEMICAL PROPERTIES</scope>
    <scope>SUBCELLULAR LOCATION</scope>
    <scope>INDUCTION</scope>
    <scope>PTM</scope>
</reference>
<reference key="6">
    <citation type="journal article" date="1998" name="Int. Arch. Allergy Immunol.">
        <title>Recombinant Aspergillus fumigatus allergens: from the nucleotide sequences to clinical applications.</title>
        <authorList>
            <person name="Crameri R."/>
        </authorList>
    </citation>
    <scope>ALLERGEN</scope>
</reference>
<reference key="7">
    <citation type="journal article" date="2009" name="Infect. Immun.">
        <title>A regulator of Aspergillus fumigatus extracellular proteolytic activity is dispensable for virulence.</title>
        <authorList>
            <person name="Bergmann A."/>
            <person name="Hartmann T."/>
            <person name="Cairns T."/>
            <person name="Bignell E.M."/>
            <person name="Krappmann S."/>
        </authorList>
    </citation>
    <scope>INDUCTION</scope>
</reference>
<reference key="8">
    <citation type="journal article" date="2009" name="Infect. Immun.">
        <title>Transcription factor PrtT controls expression of multiple secreted proteases in the human pathogenic mold Aspergillus fumigatus.</title>
        <authorList>
            <person name="Sharon H."/>
            <person name="Hagag S."/>
            <person name="Osherov N."/>
        </authorList>
    </citation>
    <scope>INDUCTION</scope>
</reference>
<reference key="9">
    <citation type="journal article" date="2013" name="Acta Crystallogr. D">
        <title>A functional and structural study of the major metalloprotease secreted by the pathogenic fungus Aspergillus fumigatus.</title>
        <authorList>
            <person name="Fernandez D."/>
            <person name="Russi S."/>
            <person name="Vendrell J."/>
            <person name="Monod M."/>
            <person name="Pallares I."/>
        </authorList>
    </citation>
    <scope>X-RAY CRYSTALLOGRAPHY (1.8 ANGSTROMS) OF 31-245 AND 246-634 IN COMPLEX WITH ZINC AND CALCIUM</scope>
    <scope>CATALYTIC ACTIVITY</scope>
    <scope>COFACTOR</scope>
    <scope>SUBCELLULAR LOCATION</scope>
    <scope>SITE</scope>
    <scope>GLYCOSYLATION AT ASN-47</scope>
    <scope>DISULFIDE BONDS</scope>
    <scope>MUTAGENESIS OF ARG-470 AND CYS-634</scope>
    <scope>CIRCULAR DICHROISM ANALYSIS</scope>
</reference>
<accession>P46075</accession>
<accession>P46074</accession>
<accession>Q4WBR6</accession>
<protein>
    <recommendedName>
        <fullName>Extracellular metalloproteinase mep</fullName>
        <ecNumber evidence="7 8 9">3.4.24.-</ecNumber>
    </recommendedName>
    <alternativeName>
        <fullName evidence="11">AfuMep</fullName>
    </alternativeName>
    <alternativeName>
        <fullName evidence="12">Allergen Asp f 5</fullName>
    </alternativeName>
    <alternativeName>
        <fullName>Elastinolytic metalloproteinase mep</fullName>
    </alternativeName>
    <alternativeName>
        <fullName evidence="11">Fungalysin mep</fullName>
    </alternativeName>
    <allergenName evidence="13">Asp f 5.0101</allergenName>
</protein>
<feature type="signal peptide" evidence="2">
    <location>
        <begin position="1"/>
        <end position="18"/>
    </location>
</feature>
<feature type="propeptide" id="PRO_0000029243" evidence="2 15">
    <location>
        <begin position="19"/>
        <end position="245"/>
    </location>
</feature>
<feature type="chain" id="PRO_0000029244" description="Extracellular metalloproteinase mep" evidence="15">
    <location>
        <begin position="246"/>
        <end position="634"/>
    </location>
</feature>
<feature type="active site" evidence="4">
    <location>
        <position position="430"/>
    </location>
</feature>
<feature type="binding site" evidence="7 16">
    <location>
        <position position="245"/>
    </location>
    <ligand>
        <name>Zn(2+)</name>
        <dbReference type="ChEBI" id="CHEBI:29105"/>
        <note>catalytic</note>
    </ligand>
</feature>
<feature type="binding site" evidence="7 16">
    <location>
        <position position="364"/>
    </location>
    <ligand>
        <name>Ca(2+)</name>
        <dbReference type="ChEBI" id="CHEBI:29108"/>
        <label>1</label>
    </ligand>
</feature>
<feature type="binding site" evidence="7 16">
    <location>
        <position position="375"/>
    </location>
    <ligand>
        <name>Ca(2+)</name>
        <dbReference type="ChEBI" id="CHEBI:29108"/>
        <label>1</label>
    </ligand>
</feature>
<feature type="binding site" evidence="7 16">
    <location>
        <position position="378"/>
    </location>
    <ligand>
        <name>Ca(2+)</name>
        <dbReference type="ChEBI" id="CHEBI:29108"/>
        <label>1</label>
    </ligand>
</feature>
<feature type="binding site" evidence="7 16">
    <location>
        <position position="400"/>
    </location>
    <ligand>
        <name>Ca(2+)</name>
        <dbReference type="ChEBI" id="CHEBI:29108"/>
        <label>1</label>
    </ligand>
</feature>
<feature type="binding site" evidence="4 7 16">
    <location>
        <position position="429"/>
    </location>
    <ligand>
        <name>Zn(2+)</name>
        <dbReference type="ChEBI" id="CHEBI:29105"/>
        <note>catalytic</note>
    </ligand>
</feature>
<feature type="binding site" evidence="4 7 16">
    <location>
        <position position="433"/>
    </location>
    <ligand>
        <name>Zn(2+)</name>
        <dbReference type="ChEBI" id="CHEBI:29105"/>
        <note>catalytic</note>
    </ligand>
</feature>
<feature type="binding site" evidence="7 16">
    <location>
        <position position="437"/>
    </location>
    <ligand>
        <name>Ca(2+)</name>
        <dbReference type="ChEBI" id="CHEBI:29108"/>
        <label>2</label>
    </ligand>
</feature>
<feature type="binding site" evidence="7 16">
    <location>
        <position position="438"/>
    </location>
    <ligand>
        <name>Ca(2+)</name>
        <dbReference type="ChEBI" id="CHEBI:29108"/>
        <label>2</label>
    </ligand>
</feature>
<feature type="binding site" evidence="7 16">
    <location>
        <position position="440"/>
    </location>
    <ligand>
        <name>Ca(2+)</name>
        <dbReference type="ChEBI" id="CHEBI:29108"/>
        <label>2</label>
    </ligand>
</feature>
<feature type="binding site" evidence="7 16">
    <location>
        <position position="442"/>
    </location>
    <ligand>
        <name>Ca(2+)</name>
        <dbReference type="ChEBI" id="CHEBI:29108"/>
        <label>2</label>
    </ligand>
</feature>
<feature type="binding site" evidence="7 16">
    <location>
        <position position="445"/>
    </location>
    <ligand>
        <name>Ca(2+)</name>
        <dbReference type="ChEBI" id="CHEBI:29108"/>
        <label>2</label>
    </ligand>
</feature>
<feature type="binding site" evidence="7 16">
    <location>
        <position position="459"/>
    </location>
    <ligand>
        <name>Zn(2+)</name>
        <dbReference type="ChEBI" id="CHEBI:29105"/>
        <note>catalytic</note>
    </ligand>
</feature>
<feature type="site" description="Important for proper folding of the protein and catalytic activity" evidence="14">
    <location>
        <position position="470"/>
    </location>
</feature>
<feature type="glycosylation site" description="N-linked (GlcNAc) asparagine" evidence="3 7 16">
    <location>
        <position position="47"/>
    </location>
</feature>
<feature type="glycosylation site" description="N-linked (GlcNAc...) asparagine" evidence="3">
    <location>
        <position position="286"/>
    </location>
</feature>
<feature type="disulfide bond" evidence="7 16">
    <location>
        <begin position="448"/>
        <end position="576"/>
    </location>
</feature>
<feature type="disulfide bond" evidence="7 16">
    <location>
        <begin position="601"/>
        <end position="634"/>
    </location>
</feature>
<feature type="sequence variant" description="In strain: Isolate 13.">
    <original>Q</original>
    <variation>K</variation>
    <location>
        <position position="137"/>
    </location>
</feature>
<feature type="sequence variant" description="In strain: Isolate 13.">
    <original>A</original>
    <variation>P</variation>
    <location>
        <position position="197"/>
    </location>
</feature>
<feature type="sequence variant" description="In strain: Isolate 13.">
    <original>D</original>
    <variation>N</variation>
    <location>
        <position position="419"/>
    </location>
</feature>
<feature type="sequence variant" description="In strain: Isolate 13.">
    <original>CLN</original>
    <variation>SLY</variation>
    <location>
        <begin position="448"/>
        <end position="450"/>
    </location>
</feature>
<feature type="sequence variant" description="In strain: Isolate 13.">
    <original>T</original>
    <variation>A</variation>
    <location>
        <position position="482"/>
    </location>
</feature>
<feature type="sequence variant" description="In strain: Isolate 13.">
    <original>M</original>
    <variation>I</variation>
    <location>
        <position position="529"/>
    </location>
</feature>
<feature type="sequence variant" description="In strain: Isolate 13.">
    <original>L</original>
    <variation>F</variation>
    <location>
        <position position="573"/>
    </location>
</feature>
<feature type="sequence variant" description="In strain: Isolate 13.">
    <original>P</original>
    <variation>A</variation>
    <location>
        <position position="578"/>
    </location>
</feature>
<feature type="mutagenesis site" description="Loss of secretion." evidence="7">
    <original>R</original>
    <variation>E</variation>
    <location>
        <position position="470"/>
    </location>
</feature>
<feature type="mutagenesis site" description="Normal secretion level." evidence="7">
    <original>R</original>
    <variation>K</variation>
    <location>
        <position position="470"/>
    </location>
</feature>
<feature type="mutagenesis site" description="Slightly increased secretion level." evidence="7">
    <original>R</original>
    <variation>S</variation>
    <variation>A</variation>
    <location>
        <position position="470"/>
    </location>
</feature>
<feature type="mutagenesis site" description="Catalytically active against casein." evidence="7">
    <original>C</original>
    <variation>A</variation>
    <location>
        <position position="634"/>
    </location>
</feature>
<feature type="sequence conflict" description="In Ref. 5; AA sequence." evidence="13" ref="5">
    <original>EG</original>
    <variation>PE</variation>
    <location>
        <begin position="260"/>
        <end position="261"/>
    </location>
</feature>
<feature type="sequence conflict" description="In Ref. 5; AA sequence." evidence="13" ref="5">
    <original>I</original>
    <variation>V</variation>
    <location>
        <position position="266"/>
    </location>
</feature>
<feature type="sequence conflict" description="In Ref. 1; CAA83015." evidence="13" ref="1">
    <original>S</original>
    <variation>P</variation>
    <location>
        <position position="305"/>
    </location>
</feature>
<feature type="helix" evidence="17">
    <location>
        <begin position="34"/>
        <end position="37"/>
    </location>
</feature>
<feature type="strand" evidence="17">
    <location>
        <begin position="44"/>
        <end position="46"/>
    </location>
</feature>
<feature type="helix" evidence="17">
    <location>
        <begin position="48"/>
        <end position="54"/>
    </location>
</feature>
<feature type="helix" evidence="17">
    <location>
        <begin position="67"/>
        <end position="78"/>
    </location>
</feature>
<feature type="strand" evidence="17">
    <location>
        <begin position="83"/>
        <end position="86"/>
    </location>
</feature>
<feature type="strand" evidence="17">
    <location>
        <begin position="98"/>
        <end position="106"/>
    </location>
</feature>
<feature type="strand" evidence="17">
    <location>
        <begin position="109"/>
        <end position="120"/>
    </location>
</feature>
<feature type="strand" evidence="17">
    <location>
        <begin position="124"/>
        <end position="131"/>
    </location>
</feature>
<feature type="helix" evidence="17">
    <location>
        <begin position="142"/>
        <end position="145"/>
    </location>
</feature>
<feature type="helix" evidence="17">
    <location>
        <begin position="152"/>
        <end position="163"/>
    </location>
</feature>
<feature type="strand" evidence="17">
    <location>
        <begin position="168"/>
        <end position="175"/>
    </location>
</feature>
<feature type="strand" evidence="17">
    <location>
        <begin position="182"/>
        <end position="190"/>
    </location>
</feature>
<feature type="strand" evidence="17">
    <location>
        <begin position="196"/>
        <end position="203"/>
    </location>
</feature>
<feature type="strand" evidence="17">
    <location>
        <begin position="209"/>
        <end position="218"/>
    </location>
</feature>
<feature type="strand" evidence="17">
    <location>
        <begin position="223"/>
        <end position="231"/>
    </location>
</feature>
<feature type="helix" evidence="17">
    <location>
        <begin position="232"/>
        <end position="234"/>
    </location>
</feature>
<feature type="strand" evidence="17">
    <location>
        <begin position="236"/>
        <end position="244"/>
    </location>
</feature>
<feature type="strand" evidence="17">
    <location>
        <begin position="247"/>
        <end position="250"/>
    </location>
</feature>
<feature type="helix" evidence="17">
    <location>
        <begin position="258"/>
        <end position="260"/>
    </location>
</feature>
<feature type="strand" evidence="17">
    <location>
        <begin position="264"/>
        <end position="267"/>
    </location>
</feature>
<feature type="turn" evidence="17">
    <location>
        <begin position="272"/>
        <end position="277"/>
    </location>
</feature>
<feature type="strand" evidence="17">
    <location>
        <begin position="288"/>
        <end position="299"/>
    </location>
</feature>
<feature type="helix" evidence="17">
    <location>
        <begin position="331"/>
        <end position="334"/>
    </location>
</feature>
<feature type="helix" evidence="17">
    <location>
        <begin position="335"/>
        <end position="355"/>
    </location>
</feature>
<feature type="turn" evidence="17">
    <location>
        <begin position="360"/>
        <end position="363"/>
    </location>
</feature>
<feature type="strand" evidence="17">
    <location>
        <begin position="372"/>
        <end position="374"/>
    </location>
</feature>
<feature type="strand" evidence="17">
    <location>
        <begin position="380"/>
        <end position="384"/>
    </location>
</feature>
<feature type="strand" evidence="17">
    <location>
        <begin position="393"/>
        <end position="396"/>
    </location>
</feature>
<feature type="strand" evidence="17">
    <location>
        <begin position="404"/>
        <end position="408"/>
    </location>
</feature>
<feature type="strand" evidence="17">
    <location>
        <begin position="413"/>
        <end position="416"/>
    </location>
</feature>
<feature type="helix" evidence="17">
    <location>
        <begin position="420"/>
        <end position="422"/>
    </location>
</feature>
<feature type="helix" evidence="17">
    <location>
        <begin position="424"/>
        <end position="439"/>
    </location>
</feature>
<feature type="helix" evidence="17">
    <location>
        <begin position="452"/>
        <end position="470"/>
    </location>
</feature>
<feature type="helix" evidence="17">
    <location>
        <begin position="485"/>
        <end position="488"/>
    </location>
</feature>
<feature type="strand" evidence="17">
    <location>
        <begin position="494"/>
        <end position="497"/>
    </location>
</feature>
<feature type="turn" evidence="17">
    <location>
        <begin position="503"/>
        <end position="505"/>
    </location>
</feature>
<feature type="helix" evidence="17">
    <location>
        <begin position="510"/>
        <end position="515"/>
    </location>
</feature>
<feature type="helix" evidence="17">
    <location>
        <begin position="519"/>
        <end position="541"/>
    </location>
</feature>
<feature type="strand" evidence="17">
    <location>
        <begin position="546"/>
        <end position="548"/>
    </location>
</feature>
<feature type="strand" evidence="17">
    <location>
        <begin position="555"/>
        <end position="558"/>
    </location>
</feature>
<feature type="helix" evidence="17">
    <location>
        <begin position="559"/>
        <end position="573"/>
    </location>
</feature>
<feature type="helix" evidence="17">
    <location>
        <begin position="580"/>
        <end position="595"/>
    </location>
</feature>
<feature type="helix" evidence="17">
    <location>
        <begin position="600"/>
        <end position="609"/>
    </location>
</feature>